<feature type="chain" id="PRO_0000143382" description="Maturase K">
    <location>
        <begin position="1"/>
        <end position="507"/>
    </location>
</feature>
<reference key="1">
    <citation type="journal article" date="1999" name="Syst. Bot.">
        <title>Phylogeny, classification and floral evolution of water lilies (Nymphaeaceae; Nymphaeales): a synthesis of non-molecular, rbcL, matK and 18S rDNA data.</title>
        <authorList>
            <person name="Les D.H."/>
            <person name="Schneider E.L."/>
            <person name="Padgett D.J."/>
            <person name="Soltis P.S."/>
            <person name="Soltis D.E."/>
            <person name="Zanis M."/>
        </authorList>
        <dbReference type="AGRICOLA" id="IND22004848"/>
    </citation>
    <scope>NUCLEOTIDE SEQUENCE [GENOMIC DNA]</scope>
</reference>
<geneLocation type="chloroplast"/>
<dbReference type="EMBL" id="AF092994">
    <property type="protein sequence ID" value="AAD03031.1"/>
    <property type="molecule type" value="Genomic_DNA"/>
</dbReference>
<dbReference type="GO" id="GO:0009507">
    <property type="term" value="C:chloroplast"/>
    <property type="evidence" value="ECO:0007669"/>
    <property type="project" value="UniProtKB-SubCell"/>
</dbReference>
<dbReference type="GO" id="GO:0003723">
    <property type="term" value="F:RNA binding"/>
    <property type="evidence" value="ECO:0007669"/>
    <property type="project" value="UniProtKB-KW"/>
</dbReference>
<dbReference type="GO" id="GO:0006397">
    <property type="term" value="P:mRNA processing"/>
    <property type="evidence" value="ECO:0007669"/>
    <property type="project" value="UniProtKB-KW"/>
</dbReference>
<dbReference type="GO" id="GO:0008380">
    <property type="term" value="P:RNA splicing"/>
    <property type="evidence" value="ECO:0007669"/>
    <property type="project" value="UniProtKB-UniRule"/>
</dbReference>
<dbReference type="GO" id="GO:0008033">
    <property type="term" value="P:tRNA processing"/>
    <property type="evidence" value="ECO:0007669"/>
    <property type="project" value="UniProtKB-KW"/>
</dbReference>
<dbReference type="HAMAP" id="MF_01390">
    <property type="entry name" value="MatK"/>
    <property type="match status" value="1"/>
</dbReference>
<dbReference type="InterPro" id="IPR024937">
    <property type="entry name" value="Domain_X"/>
</dbReference>
<dbReference type="InterPro" id="IPR002866">
    <property type="entry name" value="Maturase_MatK"/>
</dbReference>
<dbReference type="InterPro" id="IPR024942">
    <property type="entry name" value="Maturase_MatK_N"/>
</dbReference>
<dbReference type="PANTHER" id="PTHR34811">
    <property type="entry name" value="MATURASE K"/>
    <property type="match status" value="1"/>
</dbReference>
<dbReference type="PANTHER" id="PTHR34811:SF1">
    <property type="entry name" value="MATURASE K"/>
    <property type="match status" value="1"/>
</dbReference>
<dbReference type="Pfam" id="PF01348">
    <property type="entry name" value="Intron_maturas2"/>
    <property type="match status" value="1"/>
</dbReference>
<dbReference type="Pfam" id="PF01824">
    <property type="entry name" value="MatK_N"/>
    <property type="match status" value="1"/>
</dbReference>
<accession>O98639</accession>
<evidence type="ECO:0000255" key="1">
    <source>
        <dbReference type="HAMAP-Rule" id="MF_01390"/>
    </source>
</evidence>
<name>MATK_EURFE</name>
<gene>
    <name evidence="1" type="primary">matK</name>
</gene>
<sequence length="507" mass="60112">MDKLQYELQGYLEIDRYRKQRFLYPLLFREYIYALAHDHGLNSSIFYEPTENLGYDNDNKSSSLIVKRLITRLHQQNHLTISVNDSRFVGPNRSFYSQTIPEGFAGIMEIPFSVRLVCSLERERIAKYQNLRSIHSIFPFLEDKLSHLYYVSDILIPYPIHLEILLQTLRTRIRDAPSLHLLRCFLHEHHNWNSLITSNKSISIFSKENQRLFLFLYNSHVYECESVLVFLRKQSSYLRSISSLAFLERTHFYGKIKHLVVTPRNDSQRTLPLWFFKEPLMHYVRYQGKSIMASRCTNLLMXKWKYYLVNFWQCHFHLWSQPGRIHINELSNHSFYFLGYLSGVRLTPWVIRSQMLENSFMIDTAIKRFDTIVPIFPLIGSLVKAKFCNVSGYPISKSVWADSSDSDIIGRFGWICRNLSHYHSGSSKKHSLCRIKYILRLSCARTLARKHKSTVRAICKRLGPKLLEEFLTEEHEIVSFILRRTRLRNERIWYLDIIRINGLVPHS</sequence>
<organism>
    <name type="scientific">Euryale ferox</name>
    <name type="common">Gorgon plant</name>
    <name type="synonym">Prickly water lily</name>
    <dbReference type="NCBI Taxonomy" id="4414"/>
    <lineage>
        <taxon>Eukaryota</taxon>
        <taxon>Viridiplantae</taxon>
        <taxon>Streptophyta</taxon>
        <taxon>Embryophyta</taxon>
        <taxon>Tracheophyta</taxon>
        <taxon>Spermatophyta</taxon>
        <taxon>Magnoliopsida</taxon>
        <taxon>Nymphaeales</taxon>
        <taxon>Nymphaeaceae</taxon>
        <taxon>Euryale</taxon>
    </lineage>
</organism>
<protein>
    <recommendedName>
        <fullName evidence="1">Maturase K</fullName>
    </recommendedName>
    <alternativeName>
        <fullName evidence="1">Intron maturase</fullName>
    </alternativeName>
</protein>
<keyword id="KW-0150">Chloroplast</keyword>
<keyword id="KW-0507">mRNA processing</keyword>
<keyword id="KW-0934">Plastid</keyword>
<keyword id="KW-0694">RNA-binding</keyword>
<keyword id="KW-0819">tRNA processing</keyword>
<comment type="function">
    <text evidence="1">Usually encoded in the trnK tRNA gene intron. Probably assists in splicing its own and other chloroplast group II introns.</text>
</comment>
<comment type="subcellular location">
    <subcellularLocation>
        <location>Plastid</location>
        <location>Chloroplast</location>
    </subcellularLocation>
</comment>
<comment type="similarity">
    <text evidence="1">Belongs to the intron maturase 2 family. MatK subfamily.</text>
</comment>
<proteinExistence type="inferred from homology"/>